<accession>B7MQR1</accession>
<protein>
    <recommendedName>
        <fullName evidence="1">Ribosomal RNA large subunit methyltransferase F</fullName>
        <ecNumber evidence="1">2.1.1.181</ecNumber>
    </recommendedName>
    <alternativeName>
        <fullName evidence="1">23S rRNA mA1618 methyltransferase</fullName>
    </alternativeName>
    <alternativeName>
        <fullName evidence="1">rRNA adenine N-6-methyltransferase</fullName>
    </alternativeName>
</protein>
<organism>
    <name type="scientific">Escherichia coli O81 (strain ED1a)</name>
    <dbReference type="NCBI Taxonomy" id="585397"/>
    <lineage>
        <taxon>Bacteria</taxon>
        <taxon>Pseudomonadati</taxon>
        <taxon>Pseudomonadota</taxon>
        <taxon>Gammaproteobacteria</taxon>
        <taxon>Enterobacterales</taxon>
        <taxon>Enterobacteriaceae</taxon>
        <taxon>Escherichia</taxon>
    </lineage>
</organism>
<proteinExistence type="inferred from homology"/>
<dbReference type="EC" id="2.1.1.181" evidence="1"/>
<dbReference type="EMBL" id="CU928162">
    <property type="protein sequence ID" value="CAR06977.1"/>
    <property type="molecule type" value="Genomic_DNA"/>
</dbReference>
<dbReference type="RefSeq" id="WP_001275941.1">
    <property type="nucleotide sequence ID" value="NC_011745.1"/>
</dbReference>
<dbReference type="SMR" id="B7MQR1"/>
<dbReference type="GeneID" id="93776621"/>
<dbReference type="KEGG" id="ecq:ECED1_0772"/>
<dbReference type="HOGENOM" id="CLU_027534_3_0_6"/>
<dbReference type="Proteomes" id="UP000000748">
    <property type="component" value="Chromosome"/>
</dbReference>
<dbReference type="GO" id="GO:0005737">
    <property type="term" value="C:cytoplasm"/>
    <property type="evidence" value="ECO:0007669"/>
    <property type="project" value="UniProtKB-SubCell"/>
</dbReference>
<dbReference type="GO" id="GO:0052907">
    <property type="term" value="F:23S rRNA (adenine(1618)-N(6))-methyltransferase activity"/>
    <property type="evidence" value="ECO:0007669"/>
    <property type="project" value="UniProtKB-EC"/>
</dbReference>
<dbReference type="GO" id="GO:0070475">
    <property type="term" value="P:rRNA base methylation"/>
    <property type="evidence" value="ECO:0007669"/>
    <property type="project" value="TreeGrafter"/>
</dbReference>
<dbReference type="FunFam" id="3.40.50.150:FF:000045">
    <property type="entry name" value="Ribosomal RNA large subunit methyltransferase F"/>
    <property type="match status" value="1"/>
</dbReference>
<dbReference type="Gene3D" id="3.40.50.150">
    <property type="entry name" value="Vaccinia Virus protein VP39"/>
    <property type="match status" value="1"/>
</dbReference>
<dbReference type="HAMAP" id="MF_01848">
    <property type="entry name" value="23SrRNA_methyltr_F"/>
    <property type="match status" value="1"/>
</dbReference>
<dbReference type="InterPro" id="IPR010286">
    <property type="entry name" value="METTL16/RlmF"/>
</dbReference>
<dbReference type="InterPro" id="IPR016909">
    <property type="entry name" value="rRNA_lsu_MeTfrase_F"/>
</dbReference>
<dbReference type="InterPro" id="IPR029063">
    <property type="entry name" value="SAM-dependent_MTases_sf"/>
</dbReference>
<dbReference type="NCBIfam" id="NF008725">
    <property type="entry name" value="PRK11727.1"/>
    <property type="match status" value="1"/>
</dbReference>
<dbReference type="PANTHER" id="PTHR13393:SF0">
    <property type="entry name" value="RNA N6-ADENOSINE-METHYLTRANSFERASE METTL16"/>
    <property type="match status" value="1"/>
</dbReference>
<dbReference type="PANTHER" id="PTHR13393">
    <property type="entry name" value="SAM-DEPENDENT METHYLTRANSFERASE"/>
    <property type="match status" value="1"/>
</dbReference>
<dbReference type="Pfam" id="PF05971">
    <property type="entry name" value="Methyltransf_10"/>
    <property type="match status" value="1"/>
</dbReference>
<dbReference type="PIRSF" id="PIRSF029038">
    <property type="entry name" value="Mtase_YbiN_prd"/>
    <property type="match status" value="1"/>
</dbReference>
<dbReference type="SUPFAM" id="SSF53335">
    <property type="entry name" value="S-adenosyl-L-methionine-dependent methyltransferases"/>
    <property type="match status" value="1"/>
</dbReference>
<gene>
    <name evidence="1" type="primary">rlmF</name>
    <name type="ordered locus">ECED1_0772</name>
</gene>
<reference key="1">
    <citation type="journal article" date="2009" name="PLoS Genet.">
        <title>Organised genome dynamics in the Escherichia coli species results in highly diverse adaptive paths.</title>
        <authorList>
            <person name="Touchon M."/>
            <person name="Hoede C."/>
            <person name="Tenaillon O."/>
            <person name="Barbe V."/>
            <person name="Baeriswyl S."/>
            <person name="Bidet P."/>
            <person name="Bingen E."/>
            <person name="Bonacorsi S."/>
            <person name="Bouchier C."/>
            <person name="Bouvet O."/>
            <person name="Calteau A."/>
            <person name="Chiapello H."/>
            <person name="Clermont O."/>
            <person name="Cruveiller S."/>
            <person name="Danchin A."/>
            <person name="Diard M."/>
            <person name="Dossat C."/>
            <person name="Karoui M.E."/>
            <person name="Frapy E."/>
            <person name="Garry L."/>
            <person name="Ghigo J.M."/>
            <person name="Gilles A.M."/>
            <person name="Johnson J."/>
            <person name="Le Bouguenec C."/>
            <person name="Lescat M."/>
            <person name="Mangenot S."/>
            <person name="Martinez-Jehanne V."/>
            <person name="Matic I."/>
            <person name="Nassif X."/>
            <person name="Oztas S."/>
            <person name="Petit M.A."/>
            <person name="Pichon C."/>
            <person name="Rouy Z."/>
            <person name="Ruf C.S."/>
            <person name="Schneider D."/>
            <person name="Tourret J."/>
            <person name="Vacherie B."/>
            <person name="Vallenet D."/>
            <person name="Medigue C."/>
            <person name="Rocha E.P.C."/>
            <person name="Denamur E."/>
        </authorList>
    </citation>
    <scope>NUCLEOTIDE SEQUENCE [LARGE SCALE GENOMIC DNA]</scope>
    <source>
        <strain>ED1a</strain>
    </source>
</reference>
<name>RLMF_ECO81</name>
<keyword id="KW-0963">Cytoplasm</keyword>
<keyword id="KW-0489">Methyltransferase</keyword>
<keyword id="KW-0698">rRNA processing</keyword>
<keyword id="KW-0949">S-adenosyl-L-methionine</keyword>
<keyword id="KW-0808">Transferase</keyword>
<sequence length="308" mass="34180">MSAQKPGLHPRNRHHSRYDLATLCQVNPELRQFLTLTPAGEQSVDFANPLAVKALNKALLAHFYAVANWDIPDGFLCPPVPGRADYIHHLADLLAEASGTIPANASILDIGVGANCIYPLIGVHEYGWRFTGSETSSQALSSAQAIISANPGLNRAIRLRRQKESGAIFNGIIHKNEQYDATLCNPPFHDSAAAARAGSERKRRNLGLNKDDALNFGGQQQELWCEGGEVAFIKKMIEESKGFAKQVMWFTSLVSRGENLPPLYRALTDVGAVKVVKKEMAQGQKQSRFIAWTFMNDEQRRRFVNRQR</sequence>
<evidence type="ECO:0000255" key="1">
    <source>
        <dbReference type="HAMAP-Rule" id="MF_01848"/>
    </source>
</evidence>
<comment type="function">
    <text evidence="1">Specifically methylates the adenine in position 1618 of 23S rRNA.</text>
</comment>
<comment type="catalytic activity">
    <reaction evidence="1">
        <text>adenosine(1618) in 23S rRNA + S-adenosyl-L-methionine = N(6)-methyladenosine(1618) in 23S rRNA + S-adenosyl-L-homocysteine + H(+)</text>
        <dbReference type="Rhea" id="RHEA:16497"/>
        <dbReference type="Rhea" id="RHEA-COMP:10229"/>
        <dbReference type="Rhea" id="RHEA-COMP:10231"/>
        <dbReference type="ChEBI" id="CHEBI:15378"/>
        <dbReference type="ChEBI" id="CHEBI:57856"/>
        <dbReference type="ChEBI" id="CHEBI:59789"/>
        <dbReference type="ChEBI" id="CHEBI:74411"/>
        <dbReference type="ChEBI" id="CHEBI:74449"/>
        <dbReference type="EC" id="2.1.1.181"/>
    </reaction>
</comment>
<comment type="subcellular location">
    <subcellularLocation>
        <location evidence="1">Cytoplasm</location>
    </subcellularLocation>
</comment>
<comment type="similarity">
    <text evidence="1">Belongs to the methyltransferase superfamily. METTL16/RlmF family.</text>
</comment>
<feature type="chain" id="PRO_1000188522" description="Ribosomal RNA large subunit methyltransferase F">
    <location>
        <begin position="1"/>
        <end position="308"/>
    </location>
</feature>